<keyword id="KW-1185">Reference proteome</keyword>
<protein>
    <recommendedName>
        <fullName>Uncharacterized protein AF_1987</fullName>
    </recommendedName>
</protein>
<dbReference type="EMBL" id="AE000782">
    <property type="protein sequence ID" value="AAB89278.1"/>
    <property type="molecule type" value="Genomic_DNA"/>
</dbReference>
<dbReference type="PIR" id="B69498">
    <property type="entry name" value="B69498"/>
</dbReference>
<dbReference type="RefSeq" id="WP_010879479.1">
    <property type="nucleotide sequence ID" value="NC_000917.1"/>
</dbReference>
<dbReference type="SMR" id="O28292"/>
<dbReference type="STRING" id="224325.AF_1987"/>
<dbReference type="PaxDb" id="224325-AF_1987"/>
<dbReference type="EnsemblBacteria" id="AAB89278">
    <property type="protein sequence ID" value="AAB89278"/>
    <property type="gene ID" value="AF_1987"/>
</dbReference>
<dbReference type="KEGG" id="afu:AF_1987"/>
<dbReference type="eggNOG" id="arCOG01448">
    <property type="taxonomic scope" value="Archaea"/>
</dbReference>
<dbReference type="HOGENOM" id="CLU_103614_0_0_2"/>
<dbReference type="OrthoDB" id="49624at2157"/>
<dbReference type="Proteomes" id="UP000002199">
    <property type="component" value="Chromosome"/>
</dbReference>
<dbReference type="Gene3D" id="1.10.10.10">
    <property type="entry name" value="Winged helix-like DNA-binding domain superfamily/Winged helix DNA-binding domain"/>
    <property type="match status" value="1"/>
</dbReference>
<dbReference type="InterPro" id="IPR054162">
    <property type="entry name" value="DUF6293_C"/>
</dbReference>
<dbReference type="InterPro" id="IPR046260">
    <property type="entry name" value="HFX_2341-like_N"/>
</dbReference>
<dbReference type="InterPro" id="IPR036388">
    <property type="entry name" value="WH-like_DNA-bd_sf"/>
</dbReference>
<dbReference type="InterPro" id="IPR036390">
    <property type="entry name" value="WH_DNA-bd_sf"/>
</dbReference>
<dbReference type="Pfam" id="PF22665">
    <property type="entry name" value="DUF6293_C"/>
    <property type="match status" value="1"/>
</dbReference>
<dbReference type="Pfam" id="PF19810">
    <property type="entry name" value="HFX_2341_N"/>
    <property type="match status" value="1"/>
</dbReference>
<dbReference type="SUPFAM" id="SSF46785">
    <property type="entry name" value="Winged helix' DNA-binding domain"/>
    <property type="match status" value="1"/>
</dbReference>
<gene>
    <name type="ordered locus">AF_1987</name>
</gene>
<organism>
    <name type="scientific">Archaeoglobus fulgidus (strain ATCC 49558 / DSM 4304 / JCM 9628 / NBRC 100126 / VC-16)</name>
    <dbReference type="NCBI Taxonomy" id="224325"/>
    <lineage>
        <taxon>Archaea</taxon>
        <taxon>Methanobacteriati</taxon>
        <taxon>Methanobacteriota</taxon>
        <taxon>Archaeoglobi</taxon>
        <taxon>Archaeoglobales</taxon>
        <taxon>Archaeoglobaceae</taxon>
        <taxon>Archaeoglobus</taxon>
    </lineage>
</organism>
<reference key="1">
    <citation type="journal article" date="1997" name="Nature">
        <title>The complete genome sequence of the hyperthermophilic, sulphate-reducing archaeon Archaeoglobus fulgidus.</title>
        <authorList>
            <person name="Klenk H.-P."/>
            <person name="Clayton R.A."/>
            <person name="Tomb J.-F."/>
            <person name="White O."/>
            <person name="Nelson K.E."/>
            <person name="Ketchum K.A."/>
            <person name="Dodson R.J."/>
            <person name="Gwinn M.L."/>
            <person name="Hickey E.K."/>
            <person name="Peterson J.D."/>
            <person name="Richardson D.L."/>
            <person name="Kerlavage A.R."/>
            <person name="Graham D.E."/>
            <person name="Kyrpides N.C."/>
            <person name="Fleischmann R.D."/>
            <person name="Quackenbush J."/>
            <person name="Lee N.H."/>
            <person name="Sutton G.G."/>
            <person name="Gill S.R."/>
            <person name="Kirkness E.F."/>
            <person name="Dougherty B.A."/>
            <person name="McKenney K."/>
            <person name="Adams M.D."/>
            <person name="Loftus B.J."/>
            <person name="Peterson S.N."/>
            <person name="Reich C.I."/>
            <person name="McNeil L.K."/>
            <person name="Badger J.H."/>
            <person name="Glodek A."/>
            <person name="Zhou L."/>
            <person name="Overbeek R."/>
            <person name="Gocayne J.D."/>
            <person name="Weidman J.F."/>
            <person name="McDonald L.A."/>
            <person name="Utterback T.R."/>
            <person name="Cotton M.D."/>
            <person name="Spriggs T."/>
            <person name="Artiach P."/>
            <person name="Kaine B.P."/>
            <person name="Sykes S.M."/>
            <person name="Sadow P.W."/>
            <person name="D'Andrea K.P."/>
            <person name="Bowman C."/>
            <person name="Fujii C."/>
            <person name="Garland S.A."/>
            <person name="Mason T.M."/>
            <person name="Olsen G.J."/>
            <person name="Fraser C.M."/>
            <person name="Smith H.O."/>
            <person name="Woese C.R."/>
            <person name="Venter J.C."/>
        </authorList>
    </citation>
    <scope>NUCLEOTIDE SEQUENCE [LARGE SCALE GENOMIC DNA]</scope>
    <source>
        <strain>ATCC 49558 / DSM 4304 / JCM 9628 / NBRC 100126 / VC-16</strain>
    </source>
</reference>
<proteinExistence type="predicted"/>
<sequence>MVSFVHVISVESNTAEIVDSVKMSGHPIHKAYLIFDSEESKKYVDEVKGTLSSLVEVEVLELKSDGVYEAVVDILRTVRKEVDAGNTVLFNITDSDKLTCLACFISAQISESKIYTKKGDSVIEIPTPPIKKVNEDKLEILRALEREGGSVDSINKLIELVEGKLEEQKKYMAQRARMSYHLNGLEEDGLVVTERKGKNLSIFLTELGKAFVAMFG</sequence>
<name>Y1987_ARCFU</name>
<feature type="chain" id="PRO_0000128079" description="Uncharacterized protein AF_1987">
    <location>
        <begin position="1"/>
        <end position="216"/>
    </location>
</feature>
<accession>O28292</accession>